<feature type="chain" id="PRO_0000375889" description="Uncharacterized ABC transporter ATP-binding protein YfmM">
    <location>
        <begin position="1"/>
        <end position="518"/>
    </location>
</feature>
<feature type="domain" description="ABC transporter 1" evidence="1">
    <location>
        <begin position="4"/>
        <end position="260"/>
    </location>
</feature>
<feature type="domain" description="ABC transporter 2" evidence="1">
    <location>
        <begin position="324"/>
        <end position="518"/>
    </location>
</feature>
<feature type="binding site" evidence="1">
    <location>
        <begin position="36"/>
        <end position="43"/>
    </location>
    <ligand>
        <name>ATP</name>
        <dbReference type="ChEBI" id="CHEBI:30616"/>
    </ligand>
</feature>
<feature type="binding site" evidence="1">
    <location>
        <begin position="357"/>
        <end position="364"/>
    </location>
    <ligand>
        <name>ATP</name>
        <dbReference type="ChEBI" id="CHEBI:30616"/>
    </ligand>
</feature>
<feature type="sequence conflict" description="In Ref. 1; BAA22327." evidence="2" ref="1">
    <original>L</original>
    <variation>P</variation>
    <location>
        <position position="424"/>
    </location>
</feature>
<comment type="similarity">
    <text evidence="2">Belongs to the ABC transporter superfamily.</text>
</comment>
<protein>
    <recommendedName>
        <fullName>Uncharacterized ABC transporter ATP-binding protein YfmM</fullName>
        <ecNumber>7.-.-.-</ecNumber>
    </recommendedName>
</protein>
<keyword id="KW-0067">ATP-binding</keyword>
<keyword id="KW-0547">Nucleotide-binding</keyword>
<keyword id="KW-1185">Reference proteome</keyword>
<keyword id="KW-0677">Repeat</keyword>
<keyword id="KW-1278">Translocase</keyword>
<keyword id="KW-0813">Transport</keyword>
<sequence>MSILSVKDLSHGFGDRAIFNNVSFRLLKGEHVGLIGANGEGKSTFMNIITGKLEPDEGKVEWSKNVRVGYLDQHTVLEKGKSIRDVLKDAFHYLFAMEEEMNEIYNKMGEADPDELEKLLEEVGVIQDALTNNDFYVIDSKVEEIARGLGLSDIGLERDVTDLSGGQRTKVLLAKLLLEKPEILLLDEPTNYLDEQHIEWLKRYLQEYENAFILISHDIPFLNSVINLIYHVENQELTRYVGDYHQFMEVYEVKKQQLEAAYKKQQQEVAELKDFVARNKARVSTRNMAMSRQKKLDKMDMIELAAEKPKPEFHFKPARTSGKLIFETKDLVIGYDSPLSRPLNLRMERGQKIALYGANGIGKTTLLKSLLGEIQPLEGSVERGEHIYTGYFEQEVKETNNNTCIEEVWSEFPSYTQYEIRAALAKCGLTTKHIESRVSVLSGGEKAKVRLCKLINSETNLLVLDEPTNHLDADAKEELKRALKEYKGSILLISHEPDFYMDIATETWNCESWTTKVL</sequence>
<dbReference type="EC" id="7.-.-.-"/>
<dbReference type="EMBL" id="D86417">
    <property type="protein sequence ID" value="BAA22327.1"/>
    <property type="molecule type" value="Genomic_DNA"/>
</dbReference>
<dbReference type="EMBL" id="AL009126">
    <property type="protein sequence ID" value="CAB12571.2"/>
    <property type="molecule type" value="Genomic_DNA"/>
</dbReference>
<dbReference type="PIR" id="D69813">
    <property type="entry name" value="D69813"/>
</dbReference>
<dbReference type="RefSeq" id="WP_003233752.1">
    <property type="nucleotide sequence ID" value="NZ_OZ025638.1"/>
</dbReference>
<dbReference type="SMR" id="O34512"/>
<dbReference type="FunCoup" id="O34512">
    <property type="interactions" value="486"/>
</dbReference>
<dbReference type="STRING" id="224308.BSU07420"/>
<dbReference type="jPOST" id="O34512"/>
<dbReference type="PaxDb" id="224308-BSU07420"/>
<dbReference type="EnsemblBacteria" id="CAB12571">
    <property type="protein sequence ID" value="CAB12571"/>
    <property type="gene ID" value="BSU_07420"/>
</dbReference>
<dbReference type="GeneID" id="936103"/>
<dbReference type="KEGG" id="bsu:BSU07420"/>
<dbReference type="PATRIC" id="fig|224308.179.peg.805"/>
<dbReference type="eggNOG" id="COG0488">
    <property type="taxonomic scope" value="Bacteria"/>
</dbReference>
<dbReference type="InParanoid" id="O34512"/>
<dbReference type="OrthoDB" id="9760950at2"/>
<dbReference type="PhylomeDB" id="O34512"/>
<dbReference type="BioCyc" id="BSUB:BSU07420-MONOMER"/>
<dbReference type="Proteomes" id="UP000001570">
    <property type="component" value="Chromosome"/>
</dbReference>
<dbReference type="GO" id="GO:0005524">
    <property type="term" value="F:ATP binding"/>
    <property type="evidence" value="ECO:0000318"/>
    <property type="project" value="GO_Central"/>
</dbReference>
<dbReference type="GO" id="GO:0016887">
    <property type="term" value="F:ATP hydrolysis activity"/>
    <property type="evidence" value="ECO:0007669"/>
    <property type="project" value="InterPro"/>
</dbReference>
<dbReference type="CDD" id="cd03221">
    <property type="entry name" value="ABCF_EF-3"/>
    <property type="match status" value="2"/>
</dbReference>
<dbReference type="FunFam" id="3.40.50.300:FF:000905">
    <property type="entry name" value="Heme ABC transporter ATP-binding protein"/>
    <property type="match status" value="1"/>
</dbReference>
<dbReference type="FunFam" id="3.40.50.300:FF:000011">
    <property type="entry name" value="Putative ABC transporter ATP-binding component"/>
    <property type="match status" value="1"/>
</dbReference>
<dbReference type="Gene3D" id="3.40.50.300">
    <property type="entry name" value="P-loop containing nucleotide triphosphate hydrolases"/>
    <property type="match status" value="2"/>
</dbReference>
<dbReference type="InterPro" id="IPR003593">
    <property type="entry name" value="AAA+_ATPase"/>
</dbReference>
<dbReference type="InterPro" id="IPR032781">
    <property type="entry name" value="ABC_tran_Xtn"/>
</dbReference>
<dbReference type="InterPro" id="IPR003439">
    <property type="entry name" value="ABC_transporter-like_ATP-bd"/>
</dbReference>
<dbReference type="InterPro" id="IPR017871">
    <property type="entry name" value="ABC_transporter-like_CS"/>
</dbReference>
<dbReference type="InterPro" id="IPR051309">
    <property type="entry name" value="ABCF_ATPase"/>
</dbReference>
<dbReference type="InterPro" id="IPR027417">
    <property type="entry name" value="P-loop_NTPase"/>
</dbReference>
<dbReference type="PANTHER" id="PTHR42855">
    <property type="entry name" value="ABC TRANSPORTER ATP-BINDING SUBUNIT"/>
    <property type="match status" value="1"/>
</dbReference>
<dbReference type="PANTHER" id="PTHR42855:SF2">
    <property type="entry name" value="DRUG RESISTANCE ABC TRANSPORTER,ATP-BINDING PROTEIN"/>
    <property type="match status" value="1"/>
</dbReference>
<dbReference type="Pfam" id="PF00005">
    <property type="entry name" value="ABC_tran"/>
    <property type="match status" value="2"/>
</dbReference>
<dbReference type="Pfam" id="PF12848">
    <property type="entry name" value="ABC_tran_Xtn"/>
    <property type="match status" value="1"/>
</dbReference>
<dbReference type="SMART" id="SM00382">
    <property type="entry name" value="AAA"/>
    <property type="match status" value="2"/>
</dbReference>
<dbReference type="SUPFAM" id="SSF52540">
    <property type="entry name" value="P-loop containing nucleoside triphosphate hydrolases"/>
    <property type="match status" value="2"/>
</dbReference>
<dbReference type="PROSITE" id="PS00211">
    <property type="entry name" value="ABC_TRANSPORTER_1"/>
    <property type="match status" value="2"/>
</dbReference>
<dbReference type="PROSITE" id="PS50893">
    <property type="entry name" value="ABC_TRANSPORTER_2"/>
    <property type="match status" value="2"/>
</dbReference>
<name>YFMM_BACSU</name>
<reference key="1">
    <citation type="journal article" date="1997" name="Gene">
        <title>Cloning and sequencing of a 35.7 kb in the 70 degree-73 degree region of the Bacillus subtilis genome reveal genes for a new two-component system, three spore germination proteins, an iron uptake system and a general stress response protein.</title>
        <authorList>
            <person name="Yamamoto H."/>
            <person name="Uchiyama S."/>
            <person name="Nugroho F.A."/>
            <person name="Sekiguchi J."/>
        </authorList>
    </citation>
    <scope>NUCLEOTIDE SEQUENCE [GENOMIC DNA]</scope>
    <source>
        <strain>168 / AC327</strain>
    </source>
</reference>
<reference key="2">
    <citation type="journal article" date="1997" name="Nature">
        <title>The complete genome sequence of the Gram-positive bacterium Bacillus subtilis.</title>
        <authorList>
            <person name="Kunst F."/>
            <person name="Ogasawara N."/>
            <person name="Moszer I."/>
            <person name="Albertini A.M."/>
            <person name="Alloni G."/>
            <person name="Azevedo V."/>
            <person name="Bertero M.G."/>
            <person name="Bessieres P."/>
            <person name="Bolotin A."/>
            <person name="Borchert S."/>
            <person name="Borriss R."/>
            <person name="Boursier L."/>
            <person name="Brans A."/>
            <person name="Braun M."/>
            <person name="Brignell S.C."/>
            <person name="Bron S."/>
            <person name="Brouillet S."/>
            <person name="Bruschi C.V."/>
            <person name="Caldwell B."/>
            <person name="Capuano V."/>
            <person name="Carter N.M."/>
            <person name="Choi S.-K."/>
            <person name="Codani J.-J."/>
            <person name="Connerton I.F."/>
            <person name="Cummings N.J."/>
            <person name="Daniel R.A."/>
            <person name="Denizot F."/>
            <person name="Devine K.M."/>
            <person name="Duesterhoeft A."/>
            <person name="Ehrlich S.D."/>
            <person name="Emmerson P.T."/>
            <person name="Entian K.-D."/>
            <person name="Errington J."/>
            <person name="Fabret C."/>
            <person name="Ferrari E."/>
            <person name="Foulger D."/>
            <person name="Fritz C."/>
            <person name="Fujita M."/>
            <person name="Fujita Y."/>
            <person name="Fuma S."/>
            <person name="Galizzi A."/>
            <person name="Galleron N."/>
            <person name="Ghim S.-Y."/>
            <person name="Glaser P."/>
            <person name="Goffeau A."/>
            <person name="Golightly E.J."/>
            <person name="Grandi G."/>
            <person name="Guiseppi G."/>
            <person name="Guy B.J."/>
            <person name="Haga K."/>
            <person name="Haiech J."/>
            <person name="Harwood C.R."/>
            <person name="Henaut A."/>
            <person name="Hilbert H."/>
            <person name="Holsappel S."/>
            <person name="Hosono S."/>
            <person name="Hullo M.-F."/>
            <person name="Itaya M."/>
            <person name="Jones L.-M."/>
            <person name="Joris B."/>
            <person name="Karamata D."/>
            <person name="Kasahara Y."/>
            <person name="Klaerr-Blanchard M."/>
            <person name="Klein C."/>
            <person name="Kobayashi Y."/>
            <person name="Koetter P."/>
            <person name="Koningstein G."/>
            <person name="Krogh S."/>
            <person name="Kumano M."/>
            <person name="Kurita K."/>
            <person name="Lapidus A."/>
            <person name="Lardinois S."/>
            <person name="Lauber J."/>
            <person name="Lazarevic V."/>
            <person name="Lee S.-M."/>
            <person name="Levine A."/>
            <person name="Liu H."/>
            <person name="Masuda S."/>
            <person name="Mauel C."/>
            <person name="Medigue C."/>
            <person name="Medina N."/>
            <person name="Mellado R.P."/>
            <person name="Mizuno M."/>
            <person name="Moestl D."/>
            <person name="Nakai S."/>
            <person name="Noback M."/>
            <person name="Noone D."/>
            <person name="O'Reilly M."/>
            <person name="Ogawa K."/>
            <person name="Ogiwara A."/>
            <person name="Oudega B."/>
            <person name="Park S.-H."/>
            <person name="Parro V."/>
            <person name="Pohl T.M."/>
            <person name="Portetelle D."/>
            <person name="Porwollik S."/>
            <person name="Prescott A.M."/>
            <person name="Presecan E."/>
            <person name="Pujic P."/>
            <person name="Purnelle B."/>
            <person name="Rapoport G."/>
            <person name="Rey M."/>
            <person name="Reynolds S."/>
            <person name="Rieger M."/>
            <person name="Rivolta C."/>
            <person name="Rocha E."/>
            <person name="Roche B."/>
            <person name="Rose M."/>
            <person name="Sadaie Y."/>
            <person name="Sato T."/>
            <person name="Scanlan E."/>
            <person name="Schleich S."/>
            <person name="Schroeter R."/>
            <person name="Scoffone F."/>
            <person name="Sekiguchi J."/>
            <person name="Sekowska A."/>
            <person name="Seror S.J."/>
            <person name="Serror P."/>
            <person name="Shin B.-S."/>
            <person name="Soldo B."/>
            <person name="Sorokin A."/>
            <person name="Tacconi E."/>
            <person name="Takagi T."/>
            <person name="Takahashi H."/>
            <person name="Takemaru K."/>
            <person name="Takeuchi M."/>
            <person name="Tamakoshi A."/>
            <person name="Tanaka T."/>
            <person name="Terpstra P."/>
            <person name="Tognoni A."/>
            <person name="Tosato V."/>
            <person name="Uchiyama S."/>
            <person name="Vandenbol M."/>
            <person name="Vannier F."/>
            <person name="Vassarotti A."/>
            <person name="Viari A."/>
            <person name="Wambutt R."/>
            <person name="Wedler E."/>
            <person name="Wedler H."/>
            <person name="Weitzenegger T."/>
            <person name="Winters P."/>
            <person name="Wipat A."/>
            <person name="Yamamoto H."/>
            <person name="Yamane K."/>
            <person name="Yasumoto K."/>
            <person name="Yata K."/>
            <person name="Yoshida K."/>
            <person name="Yoshikawa H.-F."/>
            <person name="Zumstein E."/>
            <person name="Yoshikawa H."/>
            <person name="Danchin A."/>
        </authorList>
    </citation>
    <scope>NUCLEOTIDE SEQUENCE [LARGE SCALE GENOMIC DNA]</scope>
    <source>
        <strain>168</strain>
    </source>
</reference>
<reference key="3">
    <citation type="journal article" date="2009" name="Microbiology">
        <title>From a consortium sequence to a unified sequence: the Bacillus subtilis 168 reference genome a decade later.</title>
        <authorList>
            <person name="Barbe V."/>
            <person name="Cruveiller S."/>
            <person name="Kunst F."/>
            <person name="Lenoble P."/>
            <person name="Meurice G."/>
            <person name="Sekowska A."/>
            <person name="Vallenet D."/>
            <person name="Wang T."/>
            <person name="Moszer I."/>
            <person name="Medigue C."/>
            <person name="Danchin A."/>
        </authorList>
    </citation>
    <scope>SEQUENCE REVISION TO 424</scope>
</reference>
<organism>
    <name type="scientific">Bacillus subtilis (strain 168)</name>
    <dbReference type="NCBI Taxonomy" id="224308"/>
    <lineage>
        <taxon>Bacteria</taxon>
        <taxon>Bacillati</taxon>
        <taxon>Bacillota</taxon>
        <taxon>Bacilli</taxon>
        <taxon>Bacillales</taxon>
        <taxon>Bacillaceae</taxon>
        <taxon>Bacillus</taxon>
    </lineage>
</organism>
<gene>
    <name type="primary">yfmM</name>
    <name type="ordered locus">BSU07420</name>
</gene>
<proteinExistence type="inferred from homology"/>
<evidence type="ECO:0000255" key="1">
    <source>
        <dbReference type="PROSITE-ProRule" id="PRU00434"/>
    </source>
</evidence>
<evidence type="ECO:0000305" key="2"/>
<accession>O34512</accession>
<accession>C0SPC2</accession>
<accession>Q79ES4</accession>